<sequence length="249" mass="28274">MDQAKKYANLLDSFRSSTEDILLLERLEVSDKPIYVLDSSFNPPHFAHLGMCLSIPKGSQLLLLLSITNADKPVAPAAFNERILMMEKLKTLIHNCTVSVAICKHALFVDKCRSISNKLGPREQVYLVGFDTLIRILDCKYYKEKAMQQVLQPFFSCSQILCFSREVDGTTTDDQAQYLEKIKKSLLPNIPSQWSEKIKLTKLKGNVGFGVSSTRARQAIISGDEETQRKIIPQEILNVIKVIQPYRHR</sequence>
<protein>
    <recommendedName>
        <fullName evidence="1">Putative nicotinamide mononucleotide adenylyltransferase</fullName>
        <shortName evidence="1">NMN adenylyltransferase</shortName>
        <shortName evidence="1">NMNAT</shortName>
        <ecNumber evidence="1">2.7.7.1</ecNumber>
    </recommendedName>
    <alternativeName>
        <fullName evidence="1">NMN-specific adenylyltransferase</fullName>
    </alternativeName>
    <alternativeName>
        <fullName evidence="1">Protein POF1 homolog</fullName>
    </alternativeName>
</protein>
<accession>Q9P7T7</accession>
<name>POF1L_SCHPO</name>
<reference key="1">
    <citation type="journal article" date="2002" name="Nature">
        <title>The genome sequence of Schizosaccharomyces pombe.</title>
        <authorList>
            <person name="Wood V."/>
            <person name="Gwilliam R."/>
            <person name="Rajandream M.A."/>
            <person name="Lyne M.H."/>
            <person name="Lyne R."/>
            <person name="Stewart A."/>
            <person name="Sgouros J.G."/>
            <person name="Peat N."/>
            <person name="Hayles J."/>
            <person name="Baker S.G."/>
            <person name="Basham D."/>
            <person name="Bowman S."/>
            <person name="Brooks K."/>
            <person name="Brown D."/>
            <person name="Brown S."/>
            <person name="Chillingworth T."/>
            <person name="Churcher C.M."/>
            <person name="Collins M."/>
            <person name="Connor R."/>
            <person name="Cronin A."/>
            <person name="Davis P."/>
            <person name="Feltwell T."/>
            <person name="Fraser A."/>
            <person name="Gentles S."/>
            <person name="Goble A."/>
            <person name="Hamlin N."/>
            <person name="Harris D.E."/>
            <person name="Hidalgo J."/>
            <person name="Hodgson G."/>
            <person name="Holroyd S."/>
            <person name="Hornsby T."/>
            <person name="Howarth S."/>
            <person name="Huckle E.J."/>
            <person name="Hunt S."/>
            <person name="Jagels K."/>
            <person name="James K.D."/>
            <person name="Jones L."/>
            <person name="Jones M."/>
            <person name="Leather S."/>
            <person name="McDonald S."/>
            <person name="McLean J."/>
            <person name="Mooney P."/>
            <person name="Moule S."/>
            <person name="Mungall K.L."/>
            <person name="Murphy L.D."/>
            <person name="Niblett D."/>
            <person name="Odell C."/>
            <person name="Oliver K."/>
            <person name="O'Neil S."/>
            <person name="Pearson D."/>
            <person name="Quail M.A."/>
            <person name="Rabbinowitsch E."/>
            <person name="Rutherford K.M."/>
            <person name="Rutter S."/>
            <person name="Saunders D."/>
            <person name="Seeger K."/>
            <person name="Sharp S."/>
            <person name="Skelton J."/>
            <person name="Simmonds M.N."/>
            <person name="Squares R."/>
            <person name="Squares S."/>
            <person name="Stevens K."/>
            <person name="Taylor K."/>
            <person name="Taylor R.G."/>
            <person name="Tivey A."/>
            <person name="Walsh S.V."/>
            <person name="Warren T."/>
            <person name="Whitehead S."/>
            <person name="Woodward J.R."/>
            <person name="Volckaert G."/>
            <person name="Aert R."/>
            <person name="Robben J."/>
            <person name="Grymonprez B."/>
            <person name="Weltjens I."/>
            <person name="Vanstreels E."/>
            <person name="Rieger M."/>
            <person name="Schaefer M."/>
            <person name="Mueller-Auer S."/>
            <person name="Gabel C."/>
            <person name="Fuchs M."/>
            <person name="Duesterhoeft A."/>
            <person name="Fritzc C."/>
            <person name="Holzer E."/>
            <person name="Moestl D."/>
            <person name="Hilbert H."/>
            <person name="Borzym K."/>
            <person name="Langer I."/>
            <person name="Beck A."/>
            <person name="Lehrach H."/>
            <person name="Reinhardt R."/>
            <person name="Pohl T.M."/>
            <person name="Eger P."/>
            <person name="Zimmermann W."/>
            <person name="Wedler H."/>
            <person name="Wambutt R."/>
            <person name="Purnelle B."/>
            <person name="Goffeau A."/>
            <person name="Cadieu E."/>
            <person name="Dreano S."/>
            <person name="Gloux S."/>
            <person name="Lelaure V."/>
            <person name="Mottier S."/>
            <person name="Galibert F."/>
            <person name="Aves S.J."/>
            <person name="Xiang Z."/>
            <person name="Hunt C."/>
            <person name="Moore K."/>
            <person name="Hurst S.M."/>
            <person name="Lucas M."/>
            <person name="Rochet M."/>
            <person name="Gaillardin C."/>
            <person name="Tallada V.A."/>
            <person name="Garzon A."/>
            <person name="Thode G."/>
            <person name="Daga R.R."/>
            <person name="Cruzado L."/>
            <person name="Jimenez J."/>
            <person name="Sanchez M."/>
            <person name="del Rey F."/>
            <person name="Benito J."/>
            <person name="Dominguez A."/>
            <person name="Revuelta J.L."/>
            <person name="Moreno S."/>
            <person name="Armstrong J."/>
            <person name="Forsburg S.L."/>
            <person name="Cerutti L."/>
            <person name="Lowe T."/>
            <person name="McCombie W.R."/>
            <person name="Paulsen I."/>
            <person name="Potashkin J."/>
            <person name="Shpakovski G.V."/>
            <person name="Ussery D."/>
            <person name="Barrell B.G."/>
            <person name="Nurse P."/>
        </authorList>
    </citation>
    <scope>NUCLEOTIDE SEQUENCE [LARGE SCALE GENOMIC DNA]</scope>
    <source>
        <strain>972 / ATCC 24843</strain>
    </source>
</reference>
<reference key="2">
    <citation type="journal article" date="2006" name="Nat. Biotechnol.">
        <title>ORFeome cloning and global analysis of protein localization in the fission yeast Schizosaccharomyces pombe.</title>
        <authorList>
            <person name="Matsuyama A."/>
            <person name="Arai R."/>
            <person name="Yashiroda Y."/>
            <person name="Shirai A."/>
            <person name="Kamata A."/>
            <person name="Sekido S."/>
            <person name="Kobayashi Y."/>
            <person name="Hashimoto A."/>
            <person name="Hamamoto M."/>
            <person name="Hiraoka Y."/>
            <person name="Horinouchi S."/>
            <person name="Yoshida M."/>
        </authorList>
    </citation>
    <scope>SUBCELLULAR LOCATION [LARGE SCALE ANALYSIS]</scope>
</reference>
<comment type="function">
    <text evidence="1">Catalyzes the formation of NAD(+) from nicotinamide mononucleotide (NMN) and ATP. Involved in the salvage pathway for NAD(+) biosynthesis via NMN.</text>
</comment>
<comment type="catalytic activity">
    <reaction evidence="1">
        <text>beta-nicotinamide D-ribonucleotide + ATP + H(+) = diphosphate + NAD(+)</text>
        <dbReference type="Rhea" id="RHEA:21360"/>
        <dbReference type="ChEBI" id="CHEBI:14649"/>
        <dbReference type="ChEBI" id="CHEBI:15378"/>
        <dbReference type="ChEBI" id="CHEBI:30616"/>
        <dbReference type="ChEBI" id="CHEBI:33019"/>
        <dbReference type="ChEBI" id="CHEBI:57540"/>
        <dbReference type="EC" id="2.7.7.1"/>
    </reaction>
</comment>
<comment type="pathway">
    <text evidence="1">Cofactor biosynthesis; NAD(+) biosynthesis; NAD(+) from nicotinamide D-ribonucleotide: step 1/1.</text>
</comment>
<comment type="subcellular location">
    <subcellularLocation>
        <location evidence="3">Cytoplasm</location>
    </subcellularLocation>
    <subcellularLocation>
        <location evidence="3">Nucleus</location>
    </subcellularLocation>
</comment>
<comment type="similarity">
    <text evidence="4">Belongs to the eukaryotic NMN adenylyltransferase family. POF1 subfamily.</text>
</comment>
<proteinExistence type="inferred from homology"/>
<organism>
    <name type="scientific">Schizosaccharomyces pombe (strain 972 / ATCC 24843)</name>
    <name type="common">Fission yeast</name>
    <dbReference type="NCBI Taxonomy" id="284812"/>
    <lineage>
        <taxon>Eukaryota</taxon>
        <taxon>Fungi</taxon>
        <taxon>Dikarya</taxon>
        <taxon>Ascomycota</taxon>
        <taxon>Taphrinomycotina</taxon>
        <taxon>Schizosaccharomycetes</taxon>
        <taxon>Schizosaccharomycetales</taxon>
        <taxon>Schizosaccharomycetaceae</taxon>
        <taxon>Schizosaccharomyces</taxon>
    </lineage>
</organism>
<dbReference type="EC" id="2.7.7.1" evidence="1"/>
<dbReference type="EMBL" id="CU329670">
    <property type="protein sequence ID" value="CAB71841.1"/>
    <property type="molecule type" value="Genomic_DNA"/>
</dbReference>
<dbReference type="PIR" id="T50248">
    <property type="entry name" value="T50248"/>
</dbReference>
<dbReference type="RefSeq" id="NP_594483.1">
    <property type="nucleotide sequence ID" value="NM_001019912.2"/>
</dbReference>
<dbReference type="SMR" id="Q9P7T7"/>
<dbReference type="BioGRID" id="279491">
    <property type="interactions" value="4"/>
</dbReference>
<dbReference type="FunCoup" id="Q9P7T7">
    <property type="interactions" value="302"/>
</dbReference>
<dbReference type="STRING" id="284812.Q9P7T7"/>
<dbReference type="iPTMnet" id="Q9P7T7"/>
<dbReference type="PaxDb" id="4896-SPAC694.03.1"/>
<dbReference type="EnsemblFungi" id="SPAC694.03.1">
    <property type="protein sequence ID" value="SPAC694.03.1:pep"/>
    <property type="gene ID" value="SPAC694.03"/>
</dbReference>
<dbReference type="KEGG" id="spo:2543057"/>
<dbReference type="PomBase" id="SPAC694.03"/>
<dbReference type="VEuPathDB" id="FungiDB:SPAC694.03"/>
<dbReference type="eggNOG" id="ENOG502RXY8">
    <property type="taxonomic scope" value="Eukaryota"/>
</dbReference>
<dbReference type="HOGENOM" id="CLU_032651_0_0_1"/>
<dbReference type="InParanoid" id="Q9P7T7"/>
<dbReference type="OMA" id="RLVMMEL"/>
<dbReference type="PhylomeDB" id="Q9P7T7"/>
<dbReference type="UniPathway" id="UPA00253">
    <property type="reaction ID" value="UER00600"/>
</dbReference>
<dbReference type="PRO" id="PR:Q9P7T7"/>
<dbReference type="Proteomes" id="UP000002485">
    <property type="component" value="Chromosome I"/>
</dbReference>
<dbReference type="GO" id="GO:0005737">
    <property type="term" value="C:cytoplasm"/>
    <property type="evidence" value="ECO:0000318"/>
    <property type="project" value="GO_Central"/>
</dbReference>
<dbReference type="GO" id="GO:0005829">
    <property type="term" value="C:cytosol"/>
    <property type="evidence" value="ECO:0007005"/>
    <property type="project" value="PomBase"/>
</dbReference>
<dbReference type="GO" id="GO:0005634">
    <property type="term" value="C:nucleus"/>
    <property type="evidence" value="ECO:0007005"/>
    <property type="project" value="PomBase"/>
</dbReference>
<dbReference type="GO" id="GO:0005524">
    <property type="term" value="F:ATP binding"/>
    <property type="evidence" value="ECO:0007669"/>
    <property type="project" value="UniProtKB-KW"/>
</dbReference>
<dbReference type="GO" id="GO:0016887">
    <property type="term" value="F:ATP hydrolysis activity"/>
    <property type="evidence" value="ECO:0000318"/>
    <property type="project" value="GO_Central"/>
</dbReference>
<dbReference type="GO" id="GO:0000309">
    <property type="term" value="F:nicotinamide-nucleotide adenylyltransferase activity"/>
    <property type="evidence" value="ECO:0000318"/>
    <property type="project" value="GO_Central"/>
</dbReference>
<dbReference type="GO" id="GO:0009435">
    <property type="term" value="P:NAD biosynthetic process"/>
    <property type="evidence" value="ECO:0007669"/>
    <property type="project" value="UniProtKB-UniPathway"/>
</dbReference>
<dbReference type="CDD" id="cd02165">
    <property type="entry name" value="NMNAT"/>
    <property type="match status" value="1"/>
</dbReference>
<dbReference type="Gene3D" id="3.40.50.620">
    <property type="entry name" value="HUPs"/>
    <property type="match status" value="1"/>
</dbReference>
<dbReference type="InterPro" id="IPR005248">
    <property type="entry name" value="NadD/NMNAT"/>
</dbReference>
<dbReference type="InterPro" id="IPR014729">
    <property type="entry name" value="Rossmann-like_a/b/a_fold"/>
</dbReference>
<dbReference type="PANTHER" id="PTHR31285">
    <property type="entry name" value="NICOTINAMIDE MONONUCLEOTIDE ADENYLYLTRANSFERASE"/>
    <property type="match status" value="1"/>
</dbReference>
<dbReference type="PANTHER" id="PTHR31285:SF0">
    <property type="entry name" value="NICOTINAMIDE MONONUCLEOTIDE ADENYLYLTRANSFERASE"/>
    <property type="match status" value="1"/>
</dbReference>
<dbReference type="SUPFAM" id="SSF52374">
    <property type="entry name" value="Nucleotidylyl transferase"/>
    <property type="match status" value="1"/>
</dbReference>
<feature type="chain" id="PRO_0000350758" description="Putative nicotinamide mononucleotide adenylyltransferase">
    <location>
        <begin position="1"/>
        <end position="249"/>
    </location>
</feature>
<feature type="binding site" evidence="2">
    <location>
        <position position="40"/>
    </location>
    <ligand>
        <name>NAD(+)</name>
        <dbReference type="ChEBI" id="CHEBI:57540"/>
    </ligand>
</feature>
<feature type="binding site" evidence="2">
    <location>
        <position position="41"/>
    </location>
    <ligand>
        <name>NAD(+)</name>
        <dbReference type="ChEBI" id="CHEBI:57540"/>
    </ligand>
</feature>
<feature type="binding site" description="in other chain" evidence="2">
    <location>
        <position position="48"/>
    </location>
    <ligand>
        <name>ATP</name>
        <dbReference type="ChEBI" id="CHEBI:30616"/>
        <note>ligand shared between dimeric partners</note>
    </ligand>
</feature>
<feature type="binding site" evidence="2">
    <location>
        <position position="97"/>
    </location>
    <ligand>
        <name>NAD(+)</name>
        <dbReference type="ChEBI" id="CHEBI:57540"/>
    </ligand>
</feature>
<feature type="binding site" evidence="2">
    <location>
        <position position="129"/>
    </location>
    <ligand>
        <name>NAD(+)</name>
        <dbReference type="ChEBI" id="CHEBI:57540"/>
    </ligand>
</feature>
<feature type="binding site" evidence="2">
    <location>
        <position position="131"/>
    </location>
    <ligand>
        <name>NAD(+)</name>
        <dbReference type="ChEBI" id="CHEBI:57540"/>
    </ligand>
</feature>
<feature type="binding site" evidence="2">
    <location>
        <position position="165"/>
    </location>
    <ligand>
        <name>NAD(+)</name>
        <dbReference type="ChEBI" id="CHEBI:57540"/>
    </ligand>
</feature>
<feature type="binding site" evidence="2">
    <location>
        <position position="206"/>
    </location>
    <ligand>
        <name>NAD(+)</name>
        <dbReference type="ChEBI" id="CHEBI:57540"/>
    </ligand>
</feature>
<feature type="binding site" description="in other chain" evidence="2">
    <location>
        <begin position="214"/>
        <end position="217"/>
    </location>
    <ligand>
        <name>ATP</name>
        <dbReference type="ChEBI" id="CHEBI:30616"/>
        <note>ligand shared between dimeric partners</note>
    </ligand>
</feature>
<keyword id="KW-0067">ATP-binding</keyword>
<keyword id="KW-0963">Cytoplasm</keyword>
<keyword id="KW-0520">NAD</keyword>
<keyword id="KW-0547">Nucleotide-binding</keyword>
<keyword id="KW-0548">Nucleotidyltransferase</keyword>
<keyword id="KW-0539">Nucleus</keyword>
<keyword id="KW-0662">Pyridine nucleotide biosynthesis</keyword>
<keyword id="KW-1185">Reference proteome</keyword>
<keyword id="KW-0808">Transferase</keyword>
<gene>
    <name evidence="5" type="ORF">SPAC694.03</name>
</gene>
<evidence type="ECO:0000250" key="1">
    <source>
        <dbReference type="UniProtKB" id="P25576"/>
    </source>
</evidence>
<evidence type="ECO:0000250" key="2">
    <source>
        <dbReference type="UniProtKB" id="Q96T66"/>
    </source>
</evidence>
<evidence type="ECO:0000269" key="3">
    <source>
    </source>
</evidence>
<evidence type="ECO:0000305" key="4"/>
<evidence type="ECO:0000312" key="5">
    <source>
        <dbReference type="PomBase" id="SPAC694.03"/>
    </source>
</evidence>